<comment type="function">
    <text evidence="1">Forms part of the ribosomal stalk which helps the ribosome interact with GTP-bound translation factors.</text>
</comment>
<comment type="subunit">
    <text evidence="1">Part of the ribosomal stalk of the 50S ribosomal subunit. Interacts with L10 and the large rRNA to form the base of the stalk. L10 forms an elongated spine to which L12 dimers bind in a sequential fashion forming a multimeric L10(L12)X complex.</text>
</comment>
<comment type="PTM">
    <text evidence="1">One or more lysine residues are methylated.</text>
</comment>
<comment type="similarity">
    <text evidence="1">Belongs to the universal ribosomal protein uL11 family.</text>
</comment>
<dbReference type="EMBL" id="CP000769">
    <property type="protein sequence ID" value="ABS26427.1"/>
    <property type="molecule type" value="Genomic_DNA"/>
</dbReference>
<dbReference type="RefSeq" id="WP_012097009.1">
    <property type="nucleotide sequence ID" value="NC_009675.1"/>
</dbReference>
<dbReference type="SMR" id="A7HCI1"/>
<dbReference type="STRING" id="404589.Anae109_2225"/>
<dbReference type="KEGG" id="afw:Anae109_2225"/>
<dbReference type="eggNOG" id="COG0080">
    <property type="taxonomic scope" value="Bacteria"/>
</dbReference>
<dbReference type="HOGENOM" id="CLU_074237_2_0_7"/>
<dbReference type="OrthoDB" id="9802408at2"/>
<dbReference type="Proteomes" id="UP000006382">
    <property type="component" value="Chromosome"/>
</dbReference>
<dbReference type="GO" id="GO:0022625">
    <property type="term" value="C:cytosolic large ribosomal subunit"/>
    <property type="evidence" value="ECO:0007669"/>
    <property type="project" value="TreeGrafter"/>
</dbReference>
<dbReference type="GO" id="GO:0070180">
    <property type="term" value="F:large ribosomal subunit rRNA binding"/>
    <property type="evidence" value="ECO:0007669"/>
    <property type="project" value="UniProtKB-UniRule"/>
</dbReference>
<dbReference type="GO" id="GO:0003735">
    <property type="term" value="F:structural constituent of ribosome"/>
    <property type="evidence" value="ECO:0007669"/>
    <property type="project" value="InterPro"/>
</dbReference>
<dbReference type="GO" id="GO:0006412">
    <property type="term" value="P:translation"/>
    <property type="evidence" value="ECO:0007669"/>
    <property type="project" value="UniProtKB-UniRule"/>
</dbReference>
<dbReference type="CDD" id="cd00349">
    <property type="entry name" value="Ribosomal_L11"/>
    <property type="match status" value="1"/>
</dbReference>
<dbReference type="FunFam" id="1.10.10.250:FF:000001">
    <property type="entry name" value="50S ribosomal protein L11"/>
    <property type="match status" value="1"/>
</dbReference>
<dbReference type="FunFam" id="3.30.1550.10:FF:000001">
    <property type="entry name" value="50S ribosomal protein L11"/>
    <property type="match status" value="1"/>
</dbReference>
<dbReference type="Gene3D" id="1.10.10.250">
    <property type="entry name" value="Ribosomal protein L11, C-terminal domain"/>
    <property type="match status" value="1"/>
</dbReference>
<dbReference type="Gene3D" id="3.30.1550.10">
    <property type="entry name" value="Ribosomal protein L11/L12, N-terminal domain"/>
    <property type="match status" value="1"/>
</dbReference>
<dbReference type="HAMAP" id="MF_00736">
    <property type="entry name" value="Ribosomal_uL11"/>
    <property type="match status" value="1"/>
</dbReference>
<dbReference type="InterPro" id="IPR000911">
    <property type="entry name" value="Ribosomal_uL11"/>
</dbReference>
<dbReference type="InterPro" id="IPR006519">
    <property type="entry name" value="Ribosomal_uL11_bac-typ"/>
</dbReference>
<dbReference type="InterPro" id="IPR020783">
    <property type="entry name" value="Ribosomal_uL11_C"/>
</dbReference>
<dbReference type="InterPro" id="IPR036769">
    <property type="entry name" value="Ribosomal_uL11_C_sf"/>
</dbReference>
<dbReference type="InterPro" id="IPR020785">
    <property type="entry name" value="Ribosomal_uL11_CS"/>
</dbReference>
<dbReference type="InterPro" id="IPR020784">
    <property type="entry name" value="Ribosomal_uL11_N"/>
</dbReference>
<dbReference type="InterPro" id="IPR036796">
    <property type="entry name" value="Ribosomal_uL11_N_sf"/>
</dbReference>
<dbReference type="NCBIfam" id="TIGR01632">
    <property type="entry name" value="L11_bact"/>
    <property type="match status" value="1"/>
</dbReference>
<dbReference type="PANTHER" id="PTHR11661">
    <property type="entry name" value="60S RIBOSOMAL PROTEIN L12"/>
    <property type="match status" value="1"/>
</dbReference>
<dbReference type="PANTHER" id="PTHR11661:SF1">
    <property type="entry name" value="LARGE RIBOSOMAL SUBUNIT PROTEIN UL11M"/>
    <property type="match status" value="1"/>
</dbReference>
<dbReference type="Pfam" id="PF00298">
    <property type="entry name" value="Ribosomal_L11"/>
    <property type="match status" value="1"/>
</dbReference>
<dbReference type="Pfam" id="PF03946">
    <property type="entry name" value="Ribosomal_L11_N"/>
    <property type="match status" value="1"/>
</dbReference>
<dbReference type="SMART" id="SM00649">
    <property type="entry name" value="RL11"/>
    <property type="match status" value="1"/>
</dbReference>
<dbReference type="SUPFAM" id="SSF54747">
    <property type="entry name" value="Ribosomal L11/L12e N-terminal domain"/>
    <property type="match status" value="1"/>
</dbReference>
<dbReference type="SUPFAM" id="SSF46906">
    <property type="entry name" value="Ribosomal protein L11, C-terminal domain"/>
    <property type="match status" value="1"/>
</dbReference>
<dbReference type="PROSITE" id="PS00359">
    <property type="entry name" value="RIBOSOMAL_L11"/>
    <property type="match status" value="1"/>
</dbReference>
<reference key="1">
    <citation type="journal article" date="2015" name="Genome Announc.">
        <title>Complete genome sequence of Anaeromyxobacter sp. Fw109-5, an anaerobic, metal-reducing bacterium isolated from a contaminated subsurface environment.</title>
        <authorList>
            <person name="Hwang C."/>
            <person name="Copeland A."/>
            <person name="Lucas S."/>
            <person name="Lapidus A."/>
            <person name="Barry K."/>
            <person name="Glavina Del Rio T."/>
            <person name="Dalin E."/>
            <person name="Tice H."/>
            <person name="Pitluck S."/>
            <person name="Sims D."/>
            <person name="Brettin T."/>
            <person name="Bruce D.C."/>
            <person name="Detter J.C."/>
            <person name="Han C.S."/>
            <person name="Schmutz J."/>
            <person name="Larimer F.W."/>
            <person name="Land M.L."/>
            <person name="Hauser L.J."/>
            <person name="Kyrpides N."/>
            <person name="Lykidis A."/>
            <person name="Richardson P."/>
            <person name="Belieav A."/>
            <person name="Sanford R.A."/>
            <person name="Loeffler F.E."/>
            <person name="Fields M.W."/>
        </authorList>
    </citation>
    <scope>NUCLEOTIDE SEQUENCE [LARGE SCALE GENOMIC DNA]</scope>
    <source>
        <strain>Fw109-5</strain>
    </source>
</reference>
<accession>A7HCI1</accession>
<evidence type="ECO:0000255" key="1">
    <source>
        <dbReference type="HAMAP-Rule" id="MF_00736"/>
    </source>
</evidence>
<evidence type="ECO:0000256" key="2">
    <source>
        <dbReference type="SAM" id="MobiDB-lite"/>
    </source>
</evidence>
<evidence type="ECO:0000305" key="3"/>
<name>RL11_ANADF</name>
<organism>
    <name type="scientific">Anaeromyxobacter sp. (strain Fw109-5)</name>
    <dbReference type="NCBI Taxonomy" id="404589"/>
    <lineage>
        <taxon>Bacteria</taxon>
        <taxon>Pseudomonadati</taxon>
        <taxon>Myxococcota</taxon>
        <taxon>Myxococcia</taxon>
        <taxon>Myxococcales</taxon>
        <taxon>Cystobacterineae</taxon>
        <taxon>Anaeromyxobacteraceae</taxon>
        <taxon>Anaeromyxobacter</taxon>
    </lineage>
</organism>
<proteinExistence type="inferred from homology"/>
<gene>
    <name evidence="1" type="primary">rplK</name>
    <name type="ordered locus">Anae109_2225</name>
</gene>
<keyword id="KW-0488">Methylation</keyword>
<keyword id="KW-1185">Reference proteome</keyword>
<keyword id="KW-0687">Ribonucleoprotein</keyword>
<keyword id="KW-0689">Ribosomal protein</keyword>
<keyword id="KW-0694">RNA-binding</keyword>
<keyword id="KW-0699">rRNA-binding</keyword>
<protein>
    <recommendedName>
        <fullName evidence="1">Large ribosomal subunit protein uL11</fullName>
    </recommendedName>
    <alternativeName>
        <fullName evidence="3">50S ribosomal protein L11</fullName>
    </alternativeName>
</protein>
<sequence length="148" mass="15700">MKKVTGQIKLQLPAGKANPAPPVGPALGQHGVNIMEFCKQFNAATQAQAKEALIIPVIITVYQDRSFTFQLKTPPAAILLKKAAGLHTEKKKGSGAHKPGKEKVGQVTRKQVEQIAKTKMQDMTAGSLEAAMRTVEGTALSMGIDVVG</sequence>
<feature type="chain" id="PRO_1000046137" description="Large ribosomal subunit protein uL11">
    <location>
        <begin position="1"/>
        <end position="148"/>
    </location>
</feature>
<feature type="region of interest" description="Disordered" evidence="2">
    <location>
        <begin position="89"/>
        <end position="108"/>
    </location>
</feature>